<comment type="function">
    <text evidence="1">Catalyzes the 2'-O-methylation at nucleotide C2498 in 23S rRNA.</text>
</comment>
<comment type="catalytic activity">
    <reaction evidence="1">
        <text>cytidine(2498) in 23S rRNA + S-adenosyl-L-methionine = 2'-O-methylcytidine(2498) in 23S rRNA + S-adenosyl-L-homocysteine + H(+)</text>
        <dbReference type="Rhea" id="RHEA:42788"/>
        <dbReference type="Rhea" id="RHEA-COMP:10244"/>
        <dbReference type="Rhea" id="RHEA-COMP:10245"/>
        <dbReference type="ChEBI" id="CHEBI:15378"/>
        <dbReference type="ChEBI" id="CHEBI:57856"/>
        <dbReference type="ChEBI" id="CHEBI:59789"/>
        <dbReference type="ChEBI" id="CHEBI:74495"/>
        <dbReference type="ChEBI" id="CHEBI:82748"/>
        <dbReference type="EC" id="2.1.1.186"/>
    </reaction>
</comment>
<comment type="subunit">
    <text evidence="1">Monomer.</text>
</comment>
<comment type="subcellular location">
    <subcellularLocation>
        <location evidence="1">Cytoplasm</location>
    </subcellularLocation>
</comment>
<comment type="similarity">
    <text evidence="1">Belongs to the class I-like SAM-binding methyltransferase superfamily. RNA methyltransferase RlmE family. RlmM subfamily.</text>
</comment>
<accession>C5BHA4</accession>
<reference key="1">
    <citation type="submission" date="2009-03" db="EMBL/GenBank/DDBJ databases">
        <title>Complete genome sequence of Edwardsiella ictaluri 93-146.</title>
        <authorList>
            <person name="Williams M.L."/>
            <person name="Gillaspy A.F."/>
            <person name="Dyer D.W."/>
            <person name="Thune R.L."/>
            <person name="Waldbieser G.C."/>
            <person name="Schuster S.C."/>
            <person name="Gipson J."/>
            <person name="Zaitshik J."/>
            <person name="Landry C."/>
            <person name="Lawrence M.L."/>
        </authorList>
    </citation>
    <scope>NUCLEOTIDE SEQUENCE [LARGE SCALE GENOMIC DNA]</scope>
    <source>
        <strain>93-146</strain>
    </source>
</reference>
<dbReference type="EC" id="2.1.1.186" evidence="1"/>
<dbReference type="EMBL" id="CP001600">
    <property type="protein sequence ID" value="ACR68040.1"/>
    <property type="molecule type" value="Genomic_DNA"/>
</dbReference>
<dbReference type="RefSeq" id="WP_015870233.1">
    <property type="nucleotide sequence ID" value="NZ_CP169062.1"/>
</dbReference>
<dbReference type="SMR" id="C5BHA4"/>
<dbReference type="STRING" id="67780.B6E78_14715"/>
<dbReference type="GeneID" id="69537880"/>
<dbReference type="KEGG" id="eic:NT01EI_0823"/>
<dbReference type="PATRIC" id="fig|634503.3.peg.743"/>
<dbReference type="HOGENOM" id="CLU_043780_0_0_6"/>
<dbReference type="OrthoDB" id="154490at2"/>
<dbReference type="Proteomes" id="UP000001485">
    <property type="component" value="Chromosome"/>
</dbReference>
<dbReference type="GO" id="GO:0005737">
    <property type="term" value="C:cytoplasm"/>
    <property type="evidence" value="ECO:0007669"/>
    <property type="project" value="UniProtKB-SubCell"/>
</dbReference>
<dbReference type="GO" id="GO:0008757">
    <property type="term" value="F:S-adenosylmethionine-dependent methyltransferase activity"/>
    <property type="evidence" value="ECO:0007669"/>
    <property type="project" value="UniProtKB-UniRule"/>
</dbReference>
<dbReference type="GO" id="GO:0032259">
    <property type="term" value="P:methylation"/>
    <property type="evidence" value="ECO:0007669"/>
    <property type="project" value="UniProtKB-KW"/>
</dbReference>
<dbReference type="GO" id="GO:0006364">
    <property type="term" value="P:rRNA processing"/>
    <property type="evidence" value="ECO:0007669"/>
    <property type="project" value="UniProtKB-UniRule"/>
</dbReference>
<dbReference type="Gene3D" id="3.30.2300.20">
    <property type="match status" value="1"/>
</dbReference>
<dbReference type="Gene3D" id="3.30.70.2810">
    <property type="match status" value="1"/>
</dbReference>
<dbReference type="Gene3D" id="3.40.50.150">
    <property type="entry name" value="Vaccinia Virus protein VP39"/>
    <property type="match status" value="1"/>
</dbReference>
<dbReference type="HAMAP" id="MF_01551">
    <property type="entry name" value="23SrRNA_methyltr_M"/>
    <property type="match status" value="1"/>
</dbReference>
<dbReference type="InterPro" id="IPR040739">
    <property type="entry name" value="RlmM_FDX"/>
</dbReference>
<dbReference type="InterPro" id="IPR048646">
    <property type="entry name" value="RlmM_THUMP-like"/>
</dbReference>
<dbReference type="InterPro" id="IPR002877">
    <property type="entry name" value="RNA_MeTrfase_FtsJ_dom"/>
</dbReference>
<dbReference type="InterPro" id="IPR011224">
    <property type="entry name" value="rRNA_MeTrfase_M"/>
</dbReference>
<dbReference type="InterPro" id="IPR029063">
    <property type="entry name" value="SAM-dependent_MTases_sf"/>
</dbReference>
<dbReference type="NCBIfam" id="NF008734">
    <property type="entry name" value="PRK11760.1"/>
    <property type="match status" value="1"/>
</dbReference>
<dbReference type="PANTHER" id="PTHR37524">
    <property type="entry name" value="RIBOSOMAL RNA LARGE SUBUNIT METHYLTRANSFERASE M"/>
    <property type="match status" value="1"/>
</dbReference>
<dbReference type="PANTHER" id="PTHR37524:SF2">
    <property type="entry name" value="RIBOSOMAL RNA METHYLTRANSFERASE FTSJ DOMAIN-CONTAINING PROTEIN"/>
    <property type="match status" value="1"/>
</dbReference>
<dbReference type="Pfam" id="PF01728">
    <property type="entry name" value="FtsJ"/>
    <property type="match status" value="1"/>
</dbReference>
<dbReference type="Pfam" id="PF18125">
    <property type="entry name" value="RlmM_FDX"/>
    <property type="match status" value="1"/>
</dbReference>
<dbReference type="Pfam" id="PF21239">
    <property type="entry name" value="RLMM_N"/>
    <property type="match status" value="1"/>
</dbReference>
<dbReference type="PIRSF" id="PIRSF028774">
    <property type="entry name" value="UCP028774"/>
    <property type="match status" value="1"/>
</dbReference>
<dbReference type="SUPFAM" id="SSF53335">
    <property type="entry name" value="S-adenosyl-L-methionine-dependent methyltransferases"/>
    <property type="match status" value="1"/>
</dbReference>
<proteinExistence type="inferred from homology"/>
<protein>
    <recommendedName>
        <fullName evidence="1">Ribosomal RNA large subunit methyltransferase M</fullName>
        <ecNumber evidence="1">2.1.1.186</ecNumber>
    </recommendedName>
    <alternativeName>
        <fullName evidence="1">23S rRNA (cytidine2498-2'-O)-methyltransferase</fullName>
    </alternativeName>
    <alternativeName>
        <fullName evidence="1">23S rRNA 2'-O-ribose methyltransferase RlmM</fullName>
    </alternativeName>
</protein>
<feature type="chain" id="PRO_1000215469" description="Ribosomal RNA large subunit methyltransferase M">
    <location>
        <begin position="1"/>
        <end position="374"/>
    </location>
</feature>
<feature type="active site" description="Proton acceptor" evidence="1">
    <location>
        <position position="305"/>
    </location>
</feature>
<feature type="binding site" evidence="1">
    <location>
        <position position="188"/>
    </location>
    <ligand>
        <name>S-adenosyl-L-methionine</name>
        <dbReference type="ChEBI" id="CHEBI:59789"/>
    </ligand>
</feature>
<feature type="binding site" evidence="1">
    <location>
        <begin position="221"/>
        <end position="224"/>
    </location>
    <ligand>
        <name>S-adenosyl-L-methionine</name>
        <dbReference type="ChEBI" id="CHEBI:59789"/>
    </ligand>
</feature>
<feature type="binding site" evidence="1">
    <location>
        <position position="240"/>
    </location>
    <ligand>
        <name>S-adenosyl-L-methionine</name>
        <dbReference type="ChEBI" id="CHEBI:59789"/>
    </ligand>
</feature>
<feature type="binding site" evidence="1">
    <location>
        <position position="260"/>
    </location>
    <ligand>
        <name>S-adenosyl-L-methionine</name>
        <dbReference type="ChEBI" id="CHEBI:59789"/>
    </ligand>
</feature>
<feature type="binding site" evidence="1">
    <location>
        <position position="276"/>
    </location>
    <ligand>
        <name>S-adenosyl-L-methionine</name>
        <dbReference type="ChEBI" id="CHEBI:59789"/>
    </ligand>
</feature>
<gene>
    <name evidence="1" type="primary">rlmM</name>
    <name type="ordered locus">NT01EI_0823</name>
</gene>
<evidence type="ECO:0000255" key="1">
    <source>
        <dbReference type="HAMAP-Rule" id="MF_01551"/>
    </source>
</evidence>
<keyword id="KW-0963">Cytoplasm</keyword>
<keyword id="KW-0489">Methyltransferase</keyword>
<keyword id="KW-0698">rRNA processing</keyword>
<keyword id="KW-0949">S-adenosyl-L-methionine</keyword>
<keyword id="KW-0808">Transferase</keyword>
<name>RLMM_EDWI9</name>
<organism>
    <name type="scientific">Edwardsiella ictaluri (strain 93-146)</name>
    <dbReference type="NCBI Taxonomy" id="634503"/>
    <lineage>
        <taxon>Bacteria</taxon>
        <taxon>Pseudomonadati</taxon>
        <taxon>Pseudomonadota</taxon>
        <taxon>Gammaproteobacteria</taxon>
        <taxon>Enterobacterales</taxon>
        <taxon>Hafniaceae</taxon>
        <taxon>Edwardsiella</taxon>
    </lineage>
</organism>
<sequence>MNRLALYCRPGFEKECAAEITDKAAALEVYGFARVKENSGYVLFECYQPDDADTLARKLPFRELIFARQMLVVGELLKDLPPEDRIAPICGMLLGVVEGGGELRVEVPDTNESKELLKFCRKFTVPLRAALREQRTLLRQENPYRPVVHVLFIAPGCCYVGYSYSDNNSPFYMGIPRLKFPADAPSRSTLKLEEAFHVFIPADEWDERLGSGMRAVDLGACPGGWTYQLVQRSMMVQAIDNGPMVPSLMETGQVTHHRADGFRFTPEGDNDWLVCDMVEKPAKVSALMARWLVNGWCREAIFNLKLPMKKRYEEVSQNLATLAQVLKENGINAQIAAKQLYHDREEVTVHVRRIWGAIPGRRDEREFRRREQRD</sequence>